<evidence type="ECO:0000255" key="1">
    <source>
        <dbReference type="HAMAP-Rule" id="MF_01209"/>
    </source>
</evidence>
<name>CARA_MYCBO</name>
<reference key="1">
    <citation type="journal article" date="2003" name="Proc. Natl. Acad. Sci. U.S.A.">
        <title>The complete genome sequence of Mycobacterium bovis.</title>
        <authorList>
            <person name="Garnier T."/>
            <person name="Eiglmeier K."/>
            <person name="Camus J.-C."/>
            <person name="Medina N."/>
            <person name="Mansoor H."/>
            <person name="Pryor M."/>
            <person name="Duthoy S."/>
            <person name="Grondin S."/>
            <person name="Lacroix C."/>
            <person name="Monsempe C."/>
            <person name="Simon S."/>
            <person name="Harris B."/>
            <person name="Atkin R."/>
            <person name="Doggett J."/>
            <person name="Mayes R."/>
            <person name="Keating L."/>
            <person name="Wheeler P.R."/>
            <person name="Parkhill J."/>
            <person name="Barrell B.G."/>
            <person name="Cole S.T."/>
            <person name="Gordon S.V."/>
            <person name="Hewinson R.G."/>
        </authorList>
    </citation>
    <scope>NUCLEOTIDE SEQUENCE [LARGE SCALE GENOMIC DNA]</scope>
    <source>
        <strain>ATCC BAA-935 / AF2122/97</strain>
    </source>
</reference>
<reference key="2">
    <citation type="journal article" date="2017" name="Genome Announc.">
        <title>Updated reference genome sequence and annotation of Mycobacterium bovis AF2122/97.</title>
        <authorList>
            <person name="Malone K.M."/>
            <person name="Farrell D."/>
            <person name="Stuber T.P."/>
            <person name="Schubert O.T."/>
            <person name="Aebersold R."/>
            <person name="Robbe-Austerman S."/>
            <person name="Gordon S.V."/>
        </authorList>
    </citation>
    <scope>NUCLEOTIDE SEQUENCE [LARGE SCALE GENOMIC DNA]</scope>
    <scope>GENOME REANNOTATION</scope>
    <source>
        <strain>ATCC BAA-935 / AF2122/97</strain>
    </source>
</reference>
<keyword id="KW-0028">Amino-acid biosynthesis</keyword>
<keyword id="KW-0055">Arginine biosynthesis</keyword>
<keyword id="KW-0067">ATP-binding</keyword>
<keyword id="KW-0315">Glutamine amidotransferase</keyword>
<keyword id="KW-0436">Ligase</keyword>
<keyword id="KW-0547">Nucleotide-binding</keyword>
<keyword id="KW-0665">Pyrimidine biosynthesis</keyword>
<keyword id="KW-1185">Reference proteome</keyword>
<dbReference type="EC" id="6.3.5.5" evidence="1"/>
<dbReference type="EMBL" id="LT708304">
    <property type="protein sequence ID" value="SIU00021.1"/>
    <property type="molecule type" value="Genomic_DNA"/>
</dbReference>
<dbReference type="RefSeq" id="NP_855070.1">
    <property type="nucleotide sequence ID" value="NC_002945.3"/>
</dbReference>
<dbReference type="RefSeq" id="WP_010950538.1">
    <property type="nucleotide sequence ID" value="NC_002945.4"/>
</dbReference>
<dbReference type="SMR" id="Q7U055"/>
<dbReference type="KEGG" id="mbo:BQ2027_MB1418"/>
<dbReference type="PATRIC" id="fig|233413.5.peg.1553"/>
<dbReference type="UniPathway" id="UPA00068">
    <property type="reaction ID" value="UER00171"/>
</dbReference>
<dbReference type="UniPathway" id="UPA00070">
    <property type="reaction ID" value="UER00115"/>
</dbReference>
<dbReference type="Proteomes" id="UP000001419">
    <property type="component" value="Chromosome"/>
</dbReference>
<dbReference type="GO" id="GO:0005524">
    <property type="term" value="F:ATP binding"/>
    <property type="evidence" value="ECO:0007669"/>
    <property type="project" value="UniProtKB-UniRule"/>
</dbReference>
<dbReference type="GO" id="GO:0004088">
    <property type="term" value="F:carbamoyl-phosphate synthase (glutamine-hydrolyzing) activity"/>
    <property type="evidence" value="ECO:0007669"/>
    <property type="project" value="UniProtKB-UniRule"/>
</dbReference>
<dbReference type="GO" id="GO:0004359">
    <property type="term" value="F:glutaminase activity"/>
    <property type="evidence" value="ECO:0007669"/>
    <property type="project" value="RHEA"/>
</dbReference>
<dbReference type="GO" id="GO:0006207">
    <property type="term" value="P:'de novo' pyrimidine nucleobase biosynthetic process"/>
    <property type="evidence" value="ECO:0007669"/>
    <property type="project" value="InterPro"/>
</dbReference>
<dbReference type="GO" id="GO:0044205">
    <property type="term" value="P:'de novo' UMP biosynthetic process"/>
    <property type="evidence" value="ECO:0007669"/>
    <property type="project" value="UniProtKB-UniRule"/>
</dbReference>
<dbReference type="GO" id="GO:0006541">
    <property type="term" value="P:glutamine metabolic process"/>
    <property type="evidence" value="ECO:0007669"/>
    <property type="project" value="InterPro"/>
</dbReference>
<dbReference type="GO" id="GO:0006526">
    <property type="term" value="P:L-arginine biosynthetic process"/>
    <property type="evidence" value="ECO:0007669"/>
    <property type="project" value="UniProtKB-UniRule"/>
</dbReference>
<dbReference type="CDD" id="cd01744">
    <property type="entry name" value="GATase1_CPSase"/>
    <property type="match status" value="1"/>
</dbReference>
<dbReference type="FunFam" id="3.40.50.880:FF:000018">
    <property type="entry name" value="Carbamoyl-phosphate synthase small chain"/>
    <property type="match status" value="1"/>
</dbReference>
<dbReference type="FunFam" id="3.50.30.20:FF:000001">
    <property type="entry name" value="Carbamoyl-phosphate synthase small chain"/>
    <property type="match status" value="1"/>
</dbReference>
<dbReference type="Gene3D" id="3.40.50.880">
    <property type="match status" value="1"/>
</dbReference>
<dbReference type="Gene3D" id="3.50.30.20">
    <property type="entry name" value="Carbamoyl-phosphate synthase small subunit, N-terminal domain"/>
    <property type="match status" value="1"/>
</dbReference>
<dbReference type="HAMAP" id="MF_01209">
    <property type="entry name" value="CPSase_S_chain"/>
    <property type="match status" value="1"/>
</dbReference>
<dbReference type="InterPro" id="IPR050472">
    <property type="entry name" value="Anth_synth/Amidotransfase"/>
</dbReference>
<dbReference type="InterPro" id="IPR006274">
    <property type="entry name" value="CarbamoylP_synth_ssu"/>
</dbReference>
<dbReference type="InterPro" id="IPR002474">
    <property type="entry name" value="CarbamoylP_synth_ssu_N"/>
</dbReference>
<dbReference type="InterPro" id="IPR036480">
    <property type="entry name" value="CarbP_synth_ssu_N_sf"/>
</dbReference>
<dbReference type="InterPro" id="IPR029062">
    <property type="entry name" value="Class_I_gatase-like"/>
</dbReference>
<dbReference type="InterPro" id="IPR035686">
    <property type="entry name" value="CPSase_GATase1"/>
</dbReference>
<dbReference type="InterPro" id="IPR017926">
    <property type="entry name" value="GATASE"/>
</dbReference>
<dbReference type="NCBIfam" id="TIGR01368">
    <property type="entry name" value="CPSaseIIsmall"/>
    <property type="match status" value="1"/>
</dbReference>
<dbReference type="NCBIfam" id="NF009475">
    <property type="entry name" value="PRK12838.1"/>
    <property type="match status" value="1"/>
</dbReference>
<dbReference type="PANTHER" id="PTHR43418:SF7">
    <property type="entry name" value="CARBAMOYL-PHOSPHATE SYNTHASE SMALL CHAIN"/>
    <property type="match status" value="1"/>
</dbReference>
<dbReference type="PANTHER" id="PTHR43418">
    <property type="entry name" value="MULTIFUNCTIONAL TRYPTOPHAN BIOSYNTHESIS PROTEIN-RELATED"/>
    <property type="match status" value="1"/>
</dbReference>
<dbReference type="Pfam" id="PF00988">
    <property type="entry name" value="CPSase_sm_chain"/>
    <property type="match status" value="1"/>
</dbReference>
<dbReference type="Pfam" id="PF00117">
    <property type="entry name" value="GATase"/>
    <property type="match status" value="1"/>
</dbReference>
<dbReference type="PRINTS" id="PR00097">
    <property type="entry name" value="ANTSNTHASEII"/>
</dbReference>
<dbReference type="PRINTS" id="PR00099">
    <property type="entry name" value="CPSGATASE"/>
</dbReference>
<dbReference type="PRINTS" id="PR00096">
    <property type="entry name" value="GATASE"/>
</dbReference>
<dbReference type="SMART" id="SM01097">
    <property type="entry name" value="CPSase_sm_chain"/>
    <property type="match status" value="1"/>
</dbReference>
<dbReference type="SUPFAM" id="SSF52021">
    <property type="entry name" value="Carbamoyl phosphate synthetase, small subunit N-terminal domain"/>
    <property type="match status" value="1"/>
</dbReference>
<dbReference type="SUPFAM" id="SSF52317">
    <property type="entry name" value="Class I glutamine amidotransferase-like"/>
    <property type="match status" value="1"/>
</dbReference>
<dbReference type="PROSITE" id="PS51273">
    <property type="entry name" value="GATASE_TYPE_1"/>
    <property type="match status" value="1"/>
</dbReference>
<protein>
    <recommendedName>
        <fullName evidence="1">Carbamoyl phosphate synthase small chain</fullName>
        <ecNumber evidence="1">6.3.5.5</ecNumber>
    </recommendedName>
    <alternativeName>
        <fullName evidence="1">Carbamoyl phosphate synthetase glutamine chain</fullName>
    </alternativeName>
</protein>
<accession>Q7U055</accession>
<accession>A0A1R3XY68</accession>
<accession>X2BHS1</accession>
<feature type="chain" id="PRO_0000112293" description="Carbamoyl phosphate synthase small chain">
    <location>
        <begin position="1"/>
        <end position="376"/>
    </location>
</feature>
<feature type="domain" description="Glutamine amidotransferase type-1" evidence="1">
    <location>
        <begin position="184"/>
        <end position="376"/>
    </location>
</feature>
<feature type="region of interest" description="CPSase" evidence="1">
    <location>
        <begin position="1"/>
        <end position="183"/>
    </location>
</feature>
<feature type="active site" description="Nucleophile" evidence="1">
    <location>
        <position position="260"/>
    </location>
</feature>
<feature type="active site" evidence="1">
    <location>
        <position position="350"/>
    </location>
</feature>
<feature type="active site" evidence="1">
    <location>
        <position position="352"/>
    </location>
</feature>
<feature type="binding site" evidence="1">
    <location>
        <position position="46"/>
    </location>
    <ligand>
        <name>L-glutamine</name>
        <dbReference type="ChEBI" id="CHEBI:58359"/>
    </ligand>
</feature>
<feature type="binding site" evidence="1">
    <location>
        <position position="232"/>
    </location>
    <ligand>
        <name>L-glutamine</name>
        <dbReference type="ChEBI" id="CHEBI:58359"/>
    </ligand>
</feature>
<feature type="binding site" evidence="1">
    <location>
        <position position="234"/>
    </location>
    <ligand>
        <name>L-glutamine</name>
        <dbReference type="ChEBI" id="CHEBI:58359"/>
    </ligand>
</feature>
<feature type="binding site" evidence="1">
    <location>
        <position position="261"/>
    </location>
    <ligand>
        <name>L-glutamine</name>
        <dbReference type="ChEBI" id="CHEBI:58359"/>
    </ligand>
</feature>
<feature type="binding site" evidence="1">
    <location>
        <position position="264"/>
    </location>
    <ligand>
        <name>L-glutamine</name>
        <dbReference type="ChEBI" id="CHEBI:58359"/>
    </ligand>
</feature>
<feature type="binding site" evidence="1">
    <location>
        <position position="302"/>
    </location>
    <ligand>
        <name>L-glutamine</name>
        <dbReference type="ChEBI" id="CHEBI:58359"/>
    </ligand>
</feature>
<feature type="binding site" evidence="1">
    <location>
        <position position="304"/>
    </location>
    <ligand>
        <name>L-glutamine</name>
        <dbReference type="ChEBI" id="CHEBI:58359"/>
    </ligand>
</feature>
<feature type="binding site" evidence="1">
    <location>
        <position position="305"/>
    </location>
    <ligand>
        <name>L-glutamine</name>
        <dbReference type="ChEBI" id="CHEBI:58359"/>
    </ligand>
</feature>
<gene>
    <name evidence="1" type="primary">carA</name>
    <name type="ordered locus">BQ2027_MB1418</name>
</gene>
<sequence>MSKAVLVLEDGRVFTGRPFGATGQALGEAVFSTGMSGYQETLTDPSYHRQIVVATAPQIGNTGWNGEDSESRGERIWVAGYAVRDPSPRASNWRATGTLEDELIRQRIVGIAGIDTRGVVRHLRSRGSMKAGVFSDGALAEPADLIARVRAQQSMLGADLAGEVSTAEPYVVEPDGPPGVSRFTVAALDLGIKTNTPRNFARRGIRCHVLPASTTFEQIAELNPHGVFLSNGPGDPATADHVVALTREVLGAGIPLFGICFGNQILGRALGLSTYKMVFGHRGINIPVVDHATGRVAVTAQNHGFALQGEAGQSFATPFGPAVVSHTCANDGVVEGVKLVDGRAFSVQYHPEAAAGPHDAEYLFDQFVELMAGEGR</sequence>
<organism>
    <name type="scientific">Mycobacterium bovis (strain ATCC BAA-935 / AF2122/97)</name>
    <dbReference type="NCBI Taxonomy" id="233413"/>
    <lineage>
        <taxon>Bacteria</taxon>
        <taxon>Bacillati</taxon>
        <taxon>Actinomycetota</taxon>
        <taxon>Actinomycetes</taxon>
        <taxon>Mycobacteriales</taxon>
        <taxon>Mycobacteriaceae</taxon>
        <taxon>Mycobacterium</taxon>
        <taxon>Mycobacterium tuberculosis complex</taxon>
    </lineage>
</organism>
<comment type="function">
    <text evidence="1">Small subunit of the glutamine-dependent carbamoyl phosphate synthetase (CPSase). CPSase catalyzes the formation of carbamoyl phosphate from the ammonia moiety of glutamine, carbonate, and phosphate donated by ATP, constituting the first step of 2 biosynthetic pathways, one leading to arginine and/or urea and the other to pyrimidine nucleotides. The small subunit (glutamine amidotransferase) binds and cleaves glutamine to supply the large subunit with the substrate ammonia.</text>
</comment>
<comment type="catalytic activity">
    <reaction evidence="1">
        <text>hydrogencarbonate + L-glutamine + 2 ATP + H2O = carbamoyl phosphate + L-glutamate + 2 ADP + phosphate + 2 H(+)</text>
        <dbReference type="Rhea" id="RHEA:18633"/>
        <dbReference type="ChEBI" id="CHEBI:15377"/>
        <dbReference type="ChEBI" id="CHEBI:15378"/>
        <dbReference type="ChEBI" id="CHEBI:17544"/>
        <dbReference type="ChEBI" id="CHEBI:29985"/>
        <dbReference type="ChEBI" id="CHEBI:30616"/>
        <dbReference type="ChEBI" id="CHEBI:43474"/>
        <dbReference type="ChEBI" id="CHEBI:58228"/>
        <dbReference type="ChEBI" id="CHEBI:58359"/>
        <dbReference type="ChEBI" id="CHEBI:456216"/>
        <dbReference type="EC" id="6.3.5.5"/>
    </reaction>
</comment>
<comment type="catalytic activity">
    <molecule>Carbamoyl phosphate synthase small chain</molecule>
    <reaction evidence="1">
        <text>L-glutamine + H2O = L-glutamate + NH4(+)</text>
        <dbReference type="Rhea" id="RHEA:15889"/>
        <dbReference type="ChEBI" id="CHEBI:15377"/>
        <dbReference type="ChEBI" id="CHEBI:28938"/>
        <dbReference type="ChEBI" id="CHEBI:29985"/>
        <dbReference type="ChEBI" id="CHEBI:58359"/>
    </reaction>
</comment>
<comment type="pathway">
    <text evidence="1">Amino-acid biosynthesis; L-arginine biosynthesis; carbamoyl phosphate from bicarbonate: step 1/1.</text>
</comment>
<comment type="pathway">
    <text evidence="1">Pyrimidine metabolism; UMP biosynthesis via de novo pathway; (S)-dihydroorotate from bicarbonate: step 1/3.</text>
</comment>
<comment type="subunit">
    <text evidence="1">Composed of two chains; the small (or glutamine) chain promotes the hydrolysis of glutamine to ammonia, which is used by the large (or ammonia) chain to synthesize carbamoyl phosphate. Tetramer of heterodimers (alpha,beta)4.</text>
</comment>
<comment type="similarity">
    <text evidence="1">Belongs to the CarA family.</text>
</comment>
<proteinExistence type="inferred from homology"/>